<name>PLRX2_ARATH</name>
<organism>
    <name type="scientific">Arabidopsis thaliana</name>
    <name type="common">Mouse-ear cress</name>
    <dbReference type="NCBI Taxonomy" id="3702"/>
    <lineage>
        <taxon>Eukaryota</taxon>
        <taxon>Viridiplantae</taxon>
        <taxon>Streptophyta</taxon>
        <taxon>Embryophyta</taxon>
        <taxon>Tracheophyta</taxon>
        <taxon>Spermatophyta</taxon>
        <taxon>Magnoliopsida</taxon>
        <taxon>eudicotyledons</taxon>
        <taxon>Gunneridae</taxon>
        <taxon>Pentapetalae</taxon>
        <taxon>rosids</taxon>
        <taxon>malvids</taxon>
        <taxon>Brassicales</taxon>
        <taxon>Brassicaceae</taxon>
        <taxon>Camelineae</taxon>
        <taxon>Arabidopsis</taxon>
    </lineage>
</organism>
<proteinExistence type="evidence at protein level"/>
<accession>Q9XIB6</accession>
<dbReference type="EMBL" id="AC007504">
    <property type="protein sequence ID" value="AAD43152.1"/>
    <property type="molecule type" value="Genomic_DNA"/>
</dbReference>
<dbReference type="EMBL" id="CP002684">
    <property type="protein sequence ID" value="AEE32435.1"/>
    <property type="molecule type" value="Genomic_DNA"/>
</dbReference>
<dbReference type="PIR" id="F96531">
    <property type="entry name" value="F96531"/>
</dbReference>
<dbReference type="RefSeq" id="NP_175372.1">
    <property type="nucleotide sequence ID" value="NM_103837.2"/>
</dbReference>
<dbReference type="SMR" id="Q9XIB6"/>
<dbReference type="FunCoup" id="Q9XIB6">
    <property type="interactions" value="17"/>
</dbReference>
<dbReference type="STRING" id="3702.Q9XIB6"/>
<dbReference type="TCDB" id="3.A.20.1.2">
    <property type="family name" value="the peroxisomal protein importer (ppi) family"/>
</dbReference>
<dbReference type="GlyCosmos" id="Q9XIB6">
    <property type="glycosylation" value="2 sites, No reported glycans"/>
</dbReference>
<dbReference type="GlyGen" id="Q9XIB6">
    <property type="glycosylation" value="11 sites"/>
</dbReference>
<dbReference type="iPTMnet" id="Q9XIB6"/>
<dbReference type="PaxDb" id="3702-AT1G49490.1"/>
<dbReference type="EnsemblPlants" id="AT1G49490.1">
    <property type="protein sequence ID" value="AT1G49490.1"/>
    <property type="gene ID" value="AT1G49490"/>
</dbReference>
<dbReference type="GeneID" id="841373"/>
<dbReference type="Gramene" id="AT1G49490.1">
    <property type="protein sequence ID" value="AT1G49490.1"/>
    <property type="gene ID" value="AT1G49490"/>
</dbReference>
<dbReference type="KEGG" id="ath:AT1G49490"/>
<dbReference type="Araport" id="AT1G49490"/>
<dbReference type="TAIR" id="AT1G49490">
    <property type="gene designation" value="LRX9"/>
</dbReference>
<dbReference type="eggNOG" id="ENOG502QRPA">
    <property type="taxonomic scope" value="Eukaryota"/>
</dbReference>
<dbReference type="HOGENOM" id="CLU_000288_23_3_1"/>
<dbReference type="InParanoid" id="Q9XIB6"/>
<dbReference type="PRO" id="PR:Q9XIB6"/>
<dbReference type="Proteomes" id="UP000006548">
    <property type="component" value="Chromosome 1"/>
</dbReference>
<dbReference type="ExpressionAtlas" id="Q9XIB6">
    <property type="expression patterns" value="baseline and differential"/>
</dbReference>
<dbReference type="GO" id="GO:0005576">
    <property type="term" value="C:extracellular region"/>
    <property type="evidence" value="ECO:0007669"/>
    <property type="project" value="UniProtKB-KW"/>
</dbReference>
<dbReference type="GO" id="GO:0005199">
    <property type="term" value="F:structural constituent of cell wall"/>
    <property type="evidence" value="ECO:0000250"/>
    <property type="project" value="TAIR"/>
</dbReference>
<dbReference type="GO" id="GO:0071555">
    <property type="term" value="P:cell wall organization"/>
    <property type="evidence" value="ECO:0007669"/>
    <property type="project" value="UniProtKB-KW"/>
</dbReference>
<dbReference type="GO" id="GO:0009860">
    <property type="term" value="P:pollen tube growth"/>
    <property type="evidence" value="ECO:0000316"/>
    <property type="project" value="TAIR"/>
</dbReference>
<dbReference type="FunFam" id="3.80.10.10:FF:000224">
    <property type="entry name" value="Leucine-rich repeat extensin-like protein 1"/>
    <property type="match status" value="1"/>
</dbReference>
<dbReference type="FunFam" id="3.80.10.10:FF:001471">
    <property type="entry name" value="Pollen-specific leucine-rich repeat extensin-like protein 2"/>
    <property type="match status" value="1"/>
</dbReference>
<dbReference type="Gene3D" id="3.80.10.10">
    <property type="entry name" value="Ribonuclease Inhibitor"/>
    <property type="match status" value="2"/>
</dbReference>
<dbReference type="InterPro" id="IPR001611">
    <property type="entry name" value="Leu-rich_rpt"/>
</dbReference>
<dbReference type="InterPro" id="IPR032675">
    <property type="entry name" value="LRR_dom_sf"/>
</dbReference>
<dbReference type="InterPro" id="IPR051582">
    <property type="entry name" value="LRR_extensin-like_regulator"/>
</dbReference>
<dbReference type="InterPro" id="IPR013210">
    <property type="entry name" value="LRR_N_plant-typ"/>
</dbReference>
<dbReference type="PANTHER" id="PTHR32093">
    <property type="entry name" value="LEUCINE-RICH REPEAT EXTENSIN-LIKE PROTEIN 3-RELATED"/>
    <property type="match status" value="1"/>
</dbReference>
<dbReference type="PANTHER" id="PTHR32093:SF123">
    <property type="entry name" value="POLLEN-SPECIFIC LEUCINE-RICH REPEAT EXTENSIN-LIKE PROTEIN 2"/>
    <property type="match status" value="1"/>
</dbReference>
<dbReference type="Pfam" id="PF00560">
    <property type="entry name" value="LRR_1"/>
    <property type="match status" value="2"/>
</dbReference>
<dbReference type="Pfam" id="PF08263">
    <property type="entry name" value="LRRNT_2"/>
    <property type="match status" value="1"/>
</dbReference>
<dbReference type="PRINTS" id="PR01217">
    <property type="entry name" value="PRICHEXTENSN"/>
</dbReference>
<dbReference type="SUPFAM" id="SSF52058">
    <property type="entry name" value="L domain-like"/>
    <property type="match status" value="1"/>
</dbReference>
<comment type="function">
    <text evidence="1">Modulates cell morphogenesis by regulating cell wall formation and assembly, and/or growth polarization.</text>
</comment>
<comment type="subcellular location">
    <subcellularLocation>
        <location evidence="1">Secreted</location>
        <location evidence="1">Cell wall</location>
    </subcellularLocation>
</comment>
<comment type="tissue specificity">
    <text evidence="4">Expressed in flowers, stamen, pollen, and pollinated carpels (at protein level).</text>
</comment>
<comment type="PTM">
    <text evidence="1">Hydroxylated on proline residues in the S-P-P-P-P repeat.</text>
</comment>
<comment type="PTM">
    <text evidence="1">O-glycosylated on hydroxyprolines.</text>
</comment>
<evidence type="ECO:0000250" key="1"/>
<evidence type="ECO:0000255" key="2"/>
<evidence type="ECO:0000256" key="3">
    <source>
        <dbReference type="SAM" id="MobiDB-lite"/>
    </source>
</evidence>
<evidence type="ECO:0000269" key="4">
    <source>
    </source>
</evidence>
<gene>
    <name type="primary">PEX2</name>
    <name type="ordered locus">At1g49490</name>
    <name type="ORF">F13F21.7</name>
</gene>
<keyword id="KW-0134">Cell wall</keyword>
<keyword id="KW-0961">Cell wall biogenesis/degradation</keyword>
<keyword id="KW-0325">Glycoprotein</keyword>
<keyword id="KW-0379">Hydroxylation</keyword>
<keyword id="KW-0433">Leucine-rich repeat</keyword>
<keyword id="KW-1185">Reference proteome</keyword>
<keyword id="KW-0677">Repeat</keyword>
<keyword id="KW-0964">Secreted</keyword>
<keyword id="KW-0732">Signal</keyword>
<feature type="signal peptide" evidence="2">
    <location>
        <begin position="1"/>
        <end position="20"/>
    </location>
</feature>
<feature type="chain" id="PRO_0000395469" description="Pollen-specific leucine-rich repeat extensin-like protein 2">
    <location>
        <begin position="21"/>
        <end position="847"/>
    </location>
</feature>
<feature type="repeat" description="LRR 1">
    <location>
        <begin position="45"/>
        <end position="71"/>
    </location>
</feature>
<feature type="repeat" description="LRR 2">
    <location>
        <begin position="106"/>
        <end position="130"/>
    </location>
</feature>
<feature type="repeat" description="LRR 3">
    <location>
        <begin position="131"/>
        <end position="153"/>
    </location>
</feature>
<feature type="repeat" description="LRR 4">
    <location>
        <begin position="155"/>
        <end position="178"/>
    </location>
</feature>
<feature type="repeat" description="LRR 5">
    <location>
        <begin position="179"/>
        <end position="202"/>
    </location>
</feature>
<feature type="repeat" description="LRR 6">
    <location>
        <begin position="204"/>
        <end position="224"/>
    </location>
</feature>
<feature type="repeat" description="LRR 7">
    <location>
        <begin position="226"/>
        <end position="248"/>
    </location>
</feature>
<feature type="repeat" description="LRR 8">
    <location>
        <begin position="249"/>
        <end position="273"/>
    </location>
</feature>
<feature type="repeat" description="LRR 9">
    <location>
        <begin position="296"/>
        <end position="319"/>
    </location>
</feature>
<feature type="repeat" description="LRR 10">
    <location>
        <begin position="321"/>
        <end position="343"/>
    </location>
</feature>
<feature type="region of interest" description="Disordered" evidence="3">
    <location>
        <begin position="381"/>
        <end position="847"/>
    </location>
</feature>
<feature type="region of interest" description="Contains the Ser-Pro(4) repeats">
    <location>
        <begin position="522"/>
        <end position="847"/>
    </location>
</feature>
<feature type="compositionally biased region" description="Basic and acidic residues" evidence="3">
    <location>
        <begin position="438"/>
        <end position="484"/>
    </location>
</feature>
<feature type="compositionally biased region" description="Pro residues" evidence="3">
    <location>
        <begin position="485"/>
        <end position="499"/>
    </location>
</feature>
<feature type="compositionally biased region" description="Pro residues" evidence="3">
    <location>
        <begin position="533"/>
        <end position="642"/>
    </location>
</feature>
<feature type="compositionally biased region" description="Polar residues" evidence="3">
    <location>
        <begin position="667"/>
        <end position="682"/>
    </location>
</feature>
<feature type="compositionally biased region" description="Polar residues" evidence="3">
    <location>
        <begin position="688"/>
        <end position="720"/>
    </location>
</feature>
<feature type="compositionally biased region" description="Polar residues" evidence="3">
    <location>
        <begin position="726"/>
        <end position="752"/>
    </location>
</feature>
<feature type="compositionally biased region" description="Low complexity" evidence="3">
    <location>
        <begin position="768"/>
        <end position="783"/>
    </location>
</feature>
<feature type="compositionally biased region" description="Low complexity" evidence="3">
    <location>
        <begin position="797"/>
        <end position="811"/>
    </location>
</feature>
<feature type="compositionally biased region" description="Pro residues" evidence="3">
    <location>
        <begin position="838"/>
        <end position="847"/>
    </location>
</feature>
<feature type="glycosylation site" description="N-linked (GlcNAc...) asparagine" evidence="2">
    <location>
        <position position="260"/>
    </location>
</feature>
<feature type="glycosylation site" description="N-linked (GlcNAc...) asparagine" evidence="2">
    <location>
        <position position="274"/>
    </location>
</feature>
<reference key="1">
    <citation type="journal article" date="2000" name="Nature">
        <title>Sequence and analysis of chromosome 1 of the plant Arabidopsis thaliana.</title>
        <authorList>
            <person name="Theologis A."/>
            <person name="Ecker J.R."/>
            <person name="Palm C.J."/>
            <person name="Federspiel N.A."/>
            <person name="Kaul S."/>
            <person name="White O."/>
            <person name="Alonso J."/>
            <person name="Altafi H."/>
            <person name="Araujo R."/>
            <person name="Bowman C.L."/>
            <person name="Brooks S.Y."/>
            <person name="Buehler E."/>
            <person name="Chan A."/>
            <person name="Chao Q."/>
            <person name="Chen H."/>
            <person name="Cheuk R.F."/>
            <person name="Chin C.W."/>
            <person name="Chung M.K."/>
            <person name="Conn L."/>
            <person name="Conway A.B."/>
            <person name="Conway A.R."/>
            <person name="Creasy T.H."/>
            <person name="Dewar K."/>
            <person name="Dunn P."/>
            <person name="Etgu P."/>
            <person name="Feldblyum T.V."/>
            <person name="Feng J.-D."/>
            <person name="Fong B."/>
            <person name="Fujii C.Y."/>
            <person name="Gill J.E."/>
            <person name="Goldsmith A.D."/>
            <person name="Haas B."/>
            <person name="Hansen N.F."/>
            <person name="Hughes B."/>
            <person name="Huizar L."/>
            <person name="Hunter J.L."/>
            <person name="Jenkins J."/>
            <person name="Johnson-Hopson C."/>
            <person name="Khan S."/>
            <person name="Khaykin E."/>
            <person name="Kim C.J."/>
            <person name="Koo H.L."/>
            <person name="Kremenetskaia I."/>
            <person name="Kurtz D.B."/>
            <person name="Kwan A."/>
            <person name="Lam B."/>
            <person name="Langin-Hooper S."/>
            <person name="Lee A."/>
            <person name="Lee J.M."/>
            <person name="Lenz C.A."/>
            <person name="Li J.H."/>
            <person name="Li Y.-P."/>
            <person name="Lin X."/>
            <person name="Liu S.X."/>
            <person name="Liu Z.A."/>
            <person name="Luros J.S."/>
            <person name="Maiti R."/>
            <person name="Marziali A."/>
            <person name="Militscher J."/>
            <person name="Miranda M."/>
            <person name="Nguyen M."/>
            <person name="Nierman W.C."/>
            <person name="Osborne B.I."/>
            <person name="Pai G."/>
            <person name="Peterson J."/>
            <person name="Pham P.K."/>
            <person name="Rizzo M."/>
            <person name="Rooney T."/>
            <person name="Rowley D."/>
            <person name="Sakano H."/>
            <person name="Salzberg S.L."/>
            <person name="Schwartz J.R."/>
            <person name="Shinn P."/>
            <person name="Southwick A.M."/>
            <person name="Sun H."/>
            <person name="Tallon L.J."/>
            <person name="Tambunga G."/>
            <person name="Toriumi M.J."/>
            <person name="Town C.D."/>
            <person name="Utterback T."/>
            <person name="Van Aken S."/>
            <person name="Vaysberg M."/>
            <person name="Vysotskaia V.S."/>
            <person name="Walker M."/>
            <person name="Wu D."/>
            <person name="Yu G."/>
            <person name="Fraser C.M."/>
            <person name="Venter J.C."/>
            <person name="Davis R.W."/>
        </authorList>
    </citation>
    <scope>NUCLEOTIDE SEQUENCE [LARGE SCALE GENOMIC DNA]</scope>
    <source>
        <strain>cv. Columbia</strain>
    </source>
</reference>
<reference key="2">
    <citation type="journal article" date="2017" name="Plant J.">
        <title>Araport11: a complete reannotation of the Arabidopsis thaliana reference genome.</title>
        <authorList>
            <person name="Cheng C.Y."/>
            <person name="Krishnakumar V."/>
            <person name="Chan A.P."/>
            <person name="Thibaud-Nissen F."/>
            <person name="Schobel S."/>
            <person name="Town C.D."/>
        </authorList>
    </citation>
    <scope>GENOME REANNOTATION</scope>
    <source>
        <strain>cv. Columbia</strain>
    </source>
</reference>
<reference key="3">
    <citation type="journal article" date="2003" name="Plant Physiol.">
        <title>Whole-genome comparison of leucine-rich repeat extensins in Arabidopsis and rice. A conserved family of cell wall proteins form a vegetative and a reproductive clade.</title>
        <authorList>
            <person name="Baumberger N."/>
            <person name="Doesseger B."/>
            <person name="Guyot R."/>
            <person name="Diet A."/>
            <person name="Parsons R.L."/>
            <person name="Clark M.A."/>
            <person name="Simmons M.P."/>
            <person name="Bedinger P."/>
            <person name="Goff S.A."/>
            <person name="Ringli C."/>
            <person name="Keller B."/>
        </authorList>
    </citation>
    <scope>TISSUE SPECIFICITY</scope>
    <scope>GENE FAMILY</scope>
    <scope>NOMENCLATURE</scope>
</reference>
<sequence length="847" mass="90990">MERPFGCFFILLLISYTVVATFDDEPSFPENADLTKDLEQKCFSINKVDPNLKFENDRLKRAYIALQAWKKAIYSDPFKTTANWVGSDVCSYNGVYCAPALDDDSLTVVAGVDLNHADIAGHLPPELGLMTDLALFHINSNRFCGIIPKSLSKLALMYEFDVSNNRFVGQFPEVSLSWPSLKFLDLRYNEFEGSLPSEIFDKDLDAIFLNNNRFESVIPGTIGKSKASVVTFANNKFSGCIPKSIGNMKNLNEIVFTGNNLTGCFPNEIGLLNNVTVFDASKNGFVGSLPSTLSGLASVEQLDLSHNKLTGFVVDKFCKLPNLDSFKFSYNFFNGEAESCVPGRNNGKQFDDTNNCLQNRPSQKPAKQCLPVVSRPVDCSKDKCSGGSNGGSSPSPNPPRTSEPKPSKPEPVMPKPSDSSKPETPKTPEQPSPKPQPPKHESPKPEEPENKHELPKQKESPKPQPSKPEDSPKPEQPKPEESPKPEQPQIPEPTKPVSPPNEAQGPTPDDPYDASPVKNRRSPPPPKVEDTRVPPPQPPMPSPSPPSPIYSPPPPVHSPPPPVYSSPPPPHVYSPPPPVASPPPPSPPPPVHSPPPPPVFSPPPPVFSPPPPSPVYSPPPPSHSPPPPVYSPPPPTFSPPPTHNTNQPPMGAPTPTQAPTPSSETTQVPTPSSESDQSQILSPVQAPTPVQSSTPSSEPTQVPTPSSSESYQAPNLSPVQAPTPVQAPTTSSETSQVPTPSSESNQSPSQAPTPILEPVHAPTPNSKPVQSPTPSSEPVSSPEQSEEVEAPEPTPVNPSSVPSSSPSTDTSIPPPENNDDDDDGDFVLPPHIGFQYASPPPPMFQGY</sequence>
<protein>
    <recommendedName>
        <fullName>Pollen-specific leucine-rich repeat extensin-like protein 2</fullName>
        <shortName>AtPEX2</shortName>
        <shortName>Pollen-specific LRR/EXTENSIN2</shortName>
    </recommendedName>
    <alternativeName>
        <fullName>Cell wall hydroxyproline-rich glycoprotein</fullName>
    </alternativeName>
</protein>